<dbReference type="EC" id="4.1.1.39" evidence="1"/>
<dbReference type="EMBL" id="D43622">
    <property type="protein sequence ID" value="BAA07731.1"/>
    <property type="molecule type" value="Genomic_DNA"/>
</dbReference>
<dbReference type="EMBL" id="AB122070">
    <property type="protein sequence ID" value="BAD15312.1"/>
    <property type="molecule type" value="Genomic_DNA"/>
</dbReference>
<dbReference type="RefSeq" id="WP_029910957.1">
    <property type="nucleotide sequence ID" value="NZ_JMIU01000001.1"/>
</dbReference>
<dbReference type="SMR" id="Q59460"/>
<dbReference type="STRING" id="28885.EI16_06350"/>
<dbReference type="GO" id="GO:0031470">
    <property type="term" value="C:carboxysome"/>
    <property type="evidence" value="ECO:0007669"/>
    <property type="project" value="UniProtKB-SubCell"/>
</dbReference>
<dbReference type="GO" id="GO:0000287">
    <property type="term" value="F:magnesium ion binding"/>
    <property type="evidence" value="ECO:0007669"/>
    <property type="project" value="UniProtKB-UniRule"/>
</dbReference>
<dbReference type="GO" id="GO:0004497">
    <property type="term" value="F:monooxygenase activity"/>
    <property type="evidence" value="ECO:0007669"/>
    <property type="project" value="UniProtKB-KW"/>
</dbReference>
<dbReference type="GO" id="GO:0016984">
    <property type="term" value="F:ribulose-bisphosphate carboxylase activity"/>
    <property type="evidence" value="ECO:0007669"/>
    <property type="project" value="UniProtKB-UniRule"/>
</dbReference>
<dbReference type="GO" id="GO:0019253">
    <property type="term" value="P:reductive pentose-phosphate cycle"/>
    <property type="evidence" value="ECO:0007669"/>
    <property type="project" value="UniProtKB-UniRule"/>
</dbReference>
<dbReference type="Gene3D" id="3.20.20.110">
    <property type="entry name" value="Ribulose bisphosphate carboxylase, large subunit, C-terminal domain"/>
    <property type="match status" value="1"/>
</dbReference>
<dbReference type="Gene3D" id="3.30.70.150">
    <property type="entry name" value="RuBisCO large subunit, N-terminal domain"/>
    <property type="match status" value="1"/>
</dbReference>
<dbReference type="HAMAP" id="MF_01338">
    <property type="entry name" value="RuBisCO_L_type1"/>
    <property type="match status" value="1"/>
</dbReference>
<dbReference type="InterPro" id="IPR033966">
    <property type="entry name" value="RuBisCO"/>
</dbReference>
<dbReference type="InterPro" id="IPR000685">
    <property type="entry name" value="RuBisCO_lsu_C"/>
</dbReference>
<dbReference type="InterPro" id="IPR036376">
    <property type="entry name" value="RuBisCO_lsu_C_sf"/>
</dbReference>
<dbReference type="InterPro" id="IPR017443">
    <property type="entry name" value="RuBisCO_lsu_fd_N"/>
</dbReference>
<dbReference type="InterPro" id="IPR036422">
    <property type="entry name" value="RuBisCO_lsu_N_sf"/>
</dbReference>
<dbReference type="InterPro" id="IPR020888">
    <property type="entry name" value="RuBisCO_lsuI"/>
</dbReference>
<dbReference type="NCBIfam" id="NF003252">
    <property type="entry name" value="PRK04208.1"/>
    <property type="match status" value="1"/>
</dbReference>
<dbReference type="PANTHER" id="PTHR42704">
    <property type="entry name" value="RIBULOSE BISPHOSPHATE CARBOXYLASE"/>
    <property type="match status" value="1"/>
</dbReference>
<dbReference type="PANTHER" id="PTHR42704:SF17">
    <property type="entry name" value="RIBULOSE BISPHOSPHATE CARBOXYLASE LARGE CHAIN"/>
    <property type="match status" value="1"/>
</dbReference>
<dbReference type="Pfam" id="PF00016">
    <property type="entry name" value="RuBisCO_large"/>
    <property type="match status" value="1"/>
</dbReference>
<dbReference type="Pfam" id="PF02788">
    <property type="entry name" value="RuBisCO_large_N"/>
    <property type="match status" value="1"/>
</dbReference>
<dbReference type="SFLD" id="SFLDG01052">
    <property type="entry name" value="RuBisCO"/>
    <property type="match status" value="1"/>
</dbReference>
<dbReference type="SFLD" id="SFLDS00014">
    <property type="entry name" value="RuBisCO"/>
    <property type="match status" value="1"/>
</dbReference>
<dbReference type="SFLD" id="SFLDG00301">
    <property type="entry name" value="RuBisCO-like_proteins"/>
    <property type="match status" value="1"/>
</dbReference>
<dbReference type="SUPFAM" id="SSF51649">
    <property type="entry name" value="RuBisCo, C-terminal domain"/>
    <property type="match status" value="1"/>
</dbReference>
<dbReference type="SUPFAM" id="SSF54966">
    <property type="entry name" value="RuBisCO, large subunit, small (N-terminal) domain"/>
    <property type="match status" value="1"/>
</dbReference>
<gene>
    <name evidence="1" type="primary">cbbL2</name>
    <name evidence="4" type="synonym">cbbL-2</name>
</gene>
<keyword id="KW-1283">Bacterial microcompartment</keyword>
<keyword id="KW-0113">Calvin cycle</keyword>
<keyword id="KW-0120">Carbon dioxide fixation</keyword>
<keyword id="KW-1282">Carboxysome</keyword>
<keyword id="KW-0456">Lyase</keyword>
<keyword id="KW-0460">Magnesium</keyword>
<keyword id="KW-0479">Metal-binding</keyword>
<keyword id="KW-0503">Monooxygenase</keyword>
<keyword id="KW-0560">Oxidoreductase</keyword>
<organism>
    <name type="scientific">Hydrogenovibrio marinus</name>
    <dbReference type="NCBI Taxonomy" id="28885"/>
    <lineage>
        <taxon>Bacteria</taxon>
        <taxon>Pseudomonadati</taxon>
        <taxon>Pseudomonadota</taxon>
        <taxon>Gammaproteobacteria</taxon>
        <taxon>Thiotrichales</taxon>
        <taxon>Piscirickettsiaceae</taxon>
        <taxon>Hydrogenovibrio</taxon>
    </lineage>
</organism>
<evidence type="ECO:0000255" key="1">
    <source>
        <dbReference type="HAMAP-Rule" id="MF_01338"/>
    </source>
</evidence>
<evidence type="ECO:0000269" key="2">
    <source>
    </source>
</evidence>
<evidence type="ECO:0000269" key="3">
    <source ref="3"/>
</evidence>
<evidence type="ECO:0000303" key="4">
    <source>
    </source>
</evidence>
<evidence type="ECO:0000305" key="5"/>
<evidence type="ECO:0000305" key="6">
    <source>
    </source>
</evidence>
<evidence type="ECO:0000305" key="7">
    <source>
    </source>
</evidence>
<feature type="chain" id="PRO_0000062625" description="Ribulose bisphosphate carboxylase large chain 2">
    <location>
        <begin position="1"/>
        <end position="471"/>
    </location>
</feature>
<feature type="active site" description="Proton acceptor" evidence="1">
    <location>
        <position position="168"/>
    </location>
</feature>
<feature type="active site" description="Proton acceptor" evidence="1">
    <location>
        <position position="287"/>
    </location>
</feature>
<feature type="binding site" description="in homodimeric partner" evidence="1">
    <location>
        <position position="116"/>
    </location>
    <ligand>
        <name>substrate</name>
    </ligand>
</feature>
<feature type="binding site" evidence="1">
    <location>
        <position position="166"/>
    </location>
    <ligand>
        <name>substrate</name>
    </ligand>
</feature>
<feature type="binding site" evidence="1">
    <location>
        <position position="170"/>
    </location>
    <ligand>
        <name>substrate</name>
    </ligand>
</feature>
<feature type="binding site" description="via carbamate group" evidence="1">
    <location>
        <position position="194"/>
    </location>
    <ligand>
        <name>Mg(2+)</name>
        <dbReference type="ChEBI" id="CHEBI:18420"/>
    </ligand>
</feature>
<feature type="binding site" evidence="1">
    <location>
        <position position="196"/>
    </location>
    <ligand>
        <name>Mg(2+)</name>
        <dbReference type="ChEBI" id="CHEBI:18420"/>
    </ligand>
</feature>
<feature type="binding site" evidence="1">
    <location>
        <position position="197"/>
    </location>
    <ligand>
        <name>Mg(2+)</name>
        <dbReference type="ChEBI" id="CHEBI:18420"/>
    </ligand>
</feature>
<feature type="binding site" evidence="1">
    <location>
        <position position="288"/>
    </location>
    <ligand>
        <name>substrate</name>
    </ligand>
</feature>
<feature type="binding site" evidence="1">
    <location>
        <position position="320"/>
    </location>
    <ligand>
        <name>substrate</name>
    </ligand>
</feature>
<feature type="binding site" evidence="1">
    <location>
        <position position="372"/>
    </location>
    <ligand>
        <name>substrate</name>
    </ligand>
</feature>
<feature type="site" description="Transition state stabilizer" evidence="1">
    <location>
        <position position="327"/>
    </location>
</feature>
<feature type="modified residue" description="N6-carboxylysine" evidence="1">
    <location>
        <position position="194"/>
    </location>
</feature>
<feature type="sequence conflict" description="In Ref. 2; BAD15312." evidence="5" ref="2">
    <original>F</original>
    <variation>Y</variation>
    <location>
        <position position="73"/>
    </location>
</feature>
<sequence length="471" mass="52005">MASKTFDAGVQDYQLTYWTPDYTPLDTDLLACFKVVPQEGVPREEAAAAVAAESSTGTWTTVWTDLLTDMEFFKGRAYRIEDVPGDKNAFYAFIAYPLDLFEEGSVVNVLTSLVGNVFGFKAVRSLRLEDLRFPIAFIKTCGGPPSGIQVERDKLNKYGRPMLGCTIKPKLGLSAKNYGRAVYECLRGGLDLTKDDENINSQPFQRWRDRFEFVAEAVDKATAETGERKGHYLNVTAGTVEEMMKRAEFAKELGQPIIMHDFLTAGFTANTTLANWCRENGMLLHIHRAMHAVIDRNPLHGIHFRVLAKCLRLSGGDHLHTGTVVGKLEGDRASTLGFVDQLRESFVPEDRSRGVFFDQDWGSMPGVMAVASGGIHVWHMPALVNIFGDDSVLQFGGGTQGHPGGNAAGAAANRVALEACVKARNEGRDLEREGGDILREAARTSKELAVALETWKEIKFEFDTVDKLDVQ</sequence>
<name>RBL1B_HYDMR</name>
<proteinExistence type="evidence at protein level"/>
<accession>Q59460</accession>
<accession>Q75W40</accession>
<protein>
    <recommendedName>
        <fullName evidence="1">Ribulose bisphosphate carboxylase large chain 2</fullName>
        <shortName evidence="1">RuBisCO large subunit 2</shortName>
        <ecNumber evidence="1">4.1.1.39</ecNumber>
    </recommendedName>
</protein>
<reference key="1">
    <citation type="journal article" date="1998" name="Arch. Microbiol.">
        <title>Phylogenetic position of an obligately chemoautotrophic, marine hydrogen-oxidizing bacterium, Hydrogenovibrio marinus, on the basis of 16S rRNA gene sequences and two form I RuBisCO gene sequences.</title>
        <authorList>
            <person name="Nishihara H."/>
            <person name="Yaguchi T."/>
            <person name="Chung S.-Y."/>
            <person name="Suzuki K."/>
            <person name="Yanagi M."/>
            <person name="Yamasato K."/>
            <person name="Kodama T."/>
            <person name="Igarashi Y."/>
        </authorList>
    </citation>
    <scope>NUCLEOTIDE SEQUENCE [GENOMIC DNA]</scope>
    <source>
        <strain>DSM 11271 / JCM 7688 / MH-110</strain>
    </source>
</reference>
<reference key="2">
    <citation type="journal article" date="2004" name="J. Bacteriol.">
        <title>CO2-responsive expression and gene organization of three ribulose-1,5-bisphosphate carboxylase/oxygenase enzymes and carboxysomes in Hydrogenovibrio marinus strain MH-110.</title>
        <authorList>
            <person name="Yoshizawa Y."/>
            <person name="Toyoda K."/>
            <person name="Arai H."/>
            <person name="Ishii M."/>
            <person name="Igarashi Y."/>
        </authorList>
    </citation>
    <scope>NUCLEOTIDE SEQUENCE [GENOMIC DNA]</scope>
    <scope>POSSIBLE SUBCELLULAR LOCATION</scope>
    <scope>INDUCTION OF EXPRESSION BY CO(2) IN H.MARINUS</scope>
    <source>
        <strain>DSM 11271 / JCM 7688 / MH-110</strain>
    </source>
</reference>
<reference key="3">
    <citation type="journal article" date="1998" name="J. Ferment. Bioeng.">
        <title>Different properties of gene products of three sets ribulose 1,5-bisphosphate carboxylase/oxygenase from a marine obligately autotrophic hydrogen-oxidizing bacterium, Hydrogenovibrio marinus strain MH-110.</title>
        <authorList>
            <person name="Hayashi N.R."/>
            <person name="Oguni A."/>
            <person name="Yaguchi T."/>
            <person name="Chung S.-Y."/>
            <person name="Nishihara H."/>
            <person name="Kodama T."/>
            <person name="Igarashi Y."/>
        </authorList>
    </citation>
    <scope>CHARACTERIZATION IN E.COLI</scope>
    <scope>FUNCTION</scope>
    <scope>BIOPHYSICOCHEMICAL PROPERTIES</scope>
    <scope>SUBUNIT</scope>
    <source>
        <strain>DSM 11271 / JCM 7688 / MH-110</strain>
    </source>
</reference>
<comment type="function">
    <text evidence="3">RuBisCO catalyzes two reactions: the carboxylation of D-ribulose 1,5-bisphosphate, the primary event in carbon dioxide fixation, as well as the oxidative fragmentation of the pentose substrate. Both reactions occur simultaneously and in competition at the same active site.</text>
</comment>
<comment type="catalytic activity">
    <reaction evidence="1 3">
        <text>2 (2R)-3-phosphoglycerate + 2 H(+) = D-ribulose 1,5-bisphosphate + CO2 + H2O</text>
        <dbReference type="Rhea" id="RHEA:23124"/>
        <dbReference type="ChEBI" id="CHEBI:15377"/>
        <dbReference type="ChEBI" id="CHEBI:15378"/>
        <dbReference type="ChEBI" id="CHEBI:16526"/>
        <dbReference type="ChEBI" id="CHEBI:57870"/>
        <dbReference type="ChEBI" id="CHEBI:58272"/>
        <dbReference type="EC" id="4.1.1.39"/>
    </reaction>
</comment>
<comment type="catalytic activity">
    <reaction evidence="1 3">
        <text>D-ribulose 1,5-bisphosphate + O2 = 2-phosphoglycolate + (2R)-3-phosphoglycerate + 2 H(+)</text>
        <dbReference type="Rhea" id="RHEA:36631"/>
        <dbReference type="ChEBI" id="CHEBI:15378"/>
        <dbReference type="ChEBI" id="CHEBI:15379"/>
        <dbReference type="ChEBI" id="CHEBI:57870"/>
        <dbReference type="ChEBI" id="CHEBI:58033"/>
        <dbReference type="ChEBI" id="CHEBI:58272"/>
    </reaction>
</comment>
<comment type="cofactor">
    <cofactor evidence="1">
        <name>Mg(2+)</name>
        <dbReference type="ChEBI" id="CHEBI:18420"/>
    </cofactor>
    <text evidence="1">Binds 1 Mg(2+) ion per subunit.</text>
</comment>
<comment type="biophysicochemical properties">
    <kinetics>
        <Vmax evidence="3">2.6 umol/min/mg enzyme with CO(2) as substrate, expressed in E.coli</Vmax>
        <text evidence="3">The CO(2)/O(2) specificity factor (tau) is 33.1.</text>
    </kinetics>
</comment>
<comment type="subunit">
    <text evidence="3 5">Heterohexadecamer of 8 large chains and 8 small chains.</text>
</comment>
<comment type="subcellular location">
    <subcellularLocation>
        <location evidence="6">Carboxysome</location>
    </subcellularLocation>
    <text evidence="5">This bacterium makes alpha-type carboxysome.</text>
</comment>
<comment type="induction">
    <text evidence="2">Both mRNA and protein accumulate at 0.15% and 0.03% CO(2), but not at 15% or 2% CO(2) (at protein level).</text>
</comment>
<comment type="miscellaneous">
    <text evidence="1">The basic functional RuBisCO is composed of a large chain homodimer in a 'head-to-tail' conformation. In form I RuBisCO this homodimer is arranged in a barrel-like tetramer with the small subunits forming a tetrameric 'cap' on each end of the 'barrel'.</text>
</comment>
<comment type="similarity">
    <text evidence="1 7">Belongs to the RuBisCO large chain family. Type I subfamily.</text>
</comment>